<comment type="function">
    <text evidence="1">Stabilizes the aggregates of proteoglycan monomers with hyaluronic acid in the extracellular cartilage matrix.</text>
</comment>
<comment type="subcellular location">
    <subcellularLocation>
        <location evidence="1">Secreted</location>
        <location evidence="1">Extracellular space</location>
        <location evidence="1">Extracellular matrix</location>
    </subcellularLocation>
</comment>
<comment type="similarity">
    <text evidence="4">Belongs to the HAPLN family.</text>
</comment>
<gene>
    <name type="primary">HAPLN1</name>
    <name type="synonym">CTRL1</name>
</gene>
<dbReference type="EMBL" id="X78077">
    <property type="protein sequence ID" value="CAA54987.1"/>
    <property type="molecule type" value="mRNA"/>
</dbReference>
<dbReference type="PIR" id="S42938">
    <property type="entry name" value="S42938"/>
</dbReference>
<dbReference type="RefSeq" id="NP_001075973.1">
    <property type="nucleotide sequence ID" value="NM_001082504.1"/>
</dbReference>
<dbReference type="RefSeq" id="XP_070088722.1">
    <property type="nucleotide sequence ID" value="XM_070232621.1"/>
</dbReference>
<dbReference type="RefSeq" id="XP_070088723.1">
    <property type="nucleotide sequence ID" value="XM_070232622.1"/>
</dbReference>
<dbReference type="SMR" id="Q28381"/>
<dbReference type="FunCoup" id="Q28381">
    <property type="interactions" value="232"/>
</dbReference>
<dbReference type="STRING" id="9796.ENSECAP00000014153"/>
<dbReference type="GlyCosmos" id="Q28381">
    <property type="glycosylation" value="2 sites, No reported glycans"/>
</dbReference>
<dbReference type="PaxDb" id="9796-ENSECAP00000014153"/>
<dbReference type="Ensembl" id="ENSECAT00000017421.2">
    <property type="protein sequence ID" value="ENSECAP00000014153.1"/>
    <property type="gene ID" value="ENSECAG00000016477.4"/>
</dbReference>
<dbReference type="GeneID" id="100034208"/>
<dbReference type="KEGG" id="ecb:100034208"/>
<dbReference type="CTD" id="1404"/>
<dbReference type="VGNC" id="VGNC:18691">
    <property type="gene designation" value="HAPLN1"/>
</dbReference>
<dbReference type="GeneTree" id="ENSGT00940000159267"/>
<dbReference type="HOGENOM" id="CLU_052285_1_0_1"/>
<dbReference type="InParanoid" id="Q28381"/>
<dbReference type="OMA" id="ERACHDQ"/>
<dbReference type="OrthoDB" id="5359219at2759"/>
<dbReference type="TreeFam" id="TF332134"/>
<dbReference type="Proteomes" id="UP000002281">
    <property type="component" value="Chromosome 14"/>
</dbReference>
<dbReference type="Bgee" id="ENSECAG00000016477">
    <property type="expression patterns" value="Expressed in articular cartilage of joint and 12 other cell types or tissues"/>
</dbReference>
<dbReference type="GO" id="GO:0005615">
    <property type="term" value="C:extracellular space"/>
    <property type="evidence" value="ECO:0000318"/>
    <property type="project" value="GO_Central"/>
</dbReference>
<dbReference type="GO" id="GO:0072534">
    <property type="term" value="C:perineuronal net"/>
    <property type="evidence" value="ECO:0000318"/>
    <property type="project" value="GO_Central"/>
</dbReference>
<dbReference type="GO" id="GO:0045202">
    <property type="term" value="C:synapse"/>
    <property type="evidence" value="ECO:0000318"/>
    <property type="project" value="GO_Central"/>
</dbReference>
<dbReference type="GO" id="GO:0005540">
    <property type="term" value="F:hyaluronic acid binding"/>
    <property type="evidence" value="ECO:0007669"/>
    <property type="project" value="UniProtKB-KW"/>
</dbReference>
<dbReference type="GO" id="GO:0007155">
    <property type="term" value="P:cell adhesion"/>
    <property type="evidence" value="ECO:0007669"/>
    <property type="project" value="InterPro"/>
</dbReference>
<dbReference type="GO" id="GO:0007417">
    <property type="term" value="P:central nervous system development"/>
    <property type="evidence" value="ECO:0000318"/>
    <property type="project" value="GO_Central"/>
</dbReference>
<dbReference type="GO" id="GO:0001501">
    <property type="term" value="P:skeletal system development"/>
    <property type="evidence" value="ECO:0000318"/>
    <property type="project" value="GO_Central"/>
</dbReference>
<dbReference type="CDD" id="cd05877">
    <property type="entry name" value="Ig_LP_like"/>
    <property type="match status" value="1"/>
</dbReference>
<dbReference type="CDD" id="cd03518">
    <property type="entry name" value="Link_domain_HAPLN_module_1"/>
    <property type="match status" value="1"/>
</dbReference>
<dbReference type="CDD" id="cd03519">
    <property type="entry name" value="Link_domain_HAPLN_module_2"/>
    <property type="match status" value="1"/>
</dbReference>
<dbReference type="FunFam" id="2.60.40.10:FF:000631">
    <property type="entry name" value="Hyaluronan and proteoglycan link protein 1"/>
    <property type="match status" value="1"/>
</dbReference>
<dbReference type="FunFam" id="3.10.100.10:FF:000001">
    <property type="entry name" value="Hyaluronan proteoglycan link protein 1"/>
    <property type="match status" value="1"/>
</dbReference>
<dbReference type="FunFam" id="3.10.100.10:FF:000002">
    <property type="entry name" value="Hyaluronan proteoglycan link protein 1"/>
    <property type="match status" value="1"/>
</dbReference>
<dbReference type="Gene3D" id="2.60.40.10">
    <property type="entry name" value="Immunoglobulins"/>
    <property type="match status" value="1"/>
</dbReference>
<dbReference type="Gene3D" id="3.10.100.10">
    <property type="entry name" value="Mannose-Binding Protein A, subunit A"/>
    <property type="match status" value="2"/>
</dbReference>
<dbReference type="InterPro" id="IPR016186">
    <property type="entry name" value="C-type_lectin-like/link_sf"/>
</dbReference>
<dbReference type="InterPro" id="IPR016187">
    <property type="entry name" value="CTDL_fold"/>
</dbReference>
<dbReference type="InterPro" id="IPR050691">
    <property type="entry name" value="Hyaluronan_bind_Proteoglycan"/>
</dbReference>
<dbReference type="InterPro" id="IPR007110">
    <property type="entry name" value="Ig-like_dom"/>
</dbReference>
<dbReference type="InterPro" id="IPR036179">
    <property type="entry name" value="Ig-like_dom_sf"/>
</dbReference>
<dbReference type="InterPro" id="IPR013783">
    <property type="entry name" value="Ig-like_fold"/>
</dbReference>
<dbReference type="InterPro" id="IPR003599">
    <property type="entry name" value="Ig_sub"/>
</dbReference>
<dbReference type="InterPro" id="IPR013106">
    <property type="entry name" value="Ig_V-set"/>
</dbReference>
<dbReference type="InterPro" id="IPR000538">
    <property type="entry name" value="Link_dom"/>
</dbReference>
<dbReference type="PANTHER" id="PTHR22804">
    <property type="entry name" value="AGGRECAN/VERSICAN PROTEOGLYCAN"/>
    <property type="match status" value="1"/>
</dbReference>
<dbReference type="PANTHER" id="PTHR22804:SF10">
    <property type="entry name" value="HYALURONAN AND PROTEOGLYCAN LINK PROTEIN 1"/>
    <property type="match status" value="1"/>
</dbReference>
<dbReference type="Pfam" id="PF07686">
    <property type="entry name" value="V-set"/>
    <property type="match status" value="1"/>
</dbReference>
<dbReference type="Pfam" id="PF00193">
    <property type="entry name" value="Xlink"/>
    <property type="match status" value="2"/>
</dbReference>
<dbReference type="PRINTS" id="PR01265">
    <property type="entry name" value="LINKMODULE"/>
</dbReference>
<dbReference type="SMART" id="SM00409">
    <property type="entry name" value="IG"/>
    <property type="match status" value="1"/>
</dbReference>
<dbReference type="SMART" id="SM00406">
    <property type="entry name" value="IGv"/>
    <property type="match status" value="1"/>
</dbReference>
<dbReference type="SMART" id="SM00445">
    <property type="entry name" value="LINK"/>
    <property type="match status" value="2"/>
</dbReference>
<dbReference type="SUPFAM" id="SSF56436">
    <property type="entry name" value="C-type lectin-like"/>
    <property type="match status" value="2"/>
</dbReference>
<dbReference type="SUPFAM" id="SSF48726">
    <property type="entry name" value="Immunoglobulin"/>
    <property type="match status" value="1"/>
</dbReference>
<dbReference type="PROSITE" id="PS50835">
    <property type="entry name" value="IG_LIKE"/>
    <property type="match status" value="1"/>
</dbReference>
<dbReference type="PROSITE" id="PS01241">
    <property type="entry name" value="LINK_1"/>
    <property type="match status" value="2"/>
</dbReference>
<dbReference type="PROSITE" id="PS50963">
    <property type="entry name" value="LINK_2"/>
    <property type="match status" value="2"/>
</dbReference>
<feature type="propeptide" id="PRO_0000013175" evidence="1">
    <location>
        <begin position="1"/>
        <end position="15"/>
    </location>
</feature>
<feature type="chain" id="PRO_0000013176" description="Hyaluronan and proteoglycan link protein 1">
    <location>
        <begin position="16"/>
        <end position="354"/>
    </location>
</feature>
<feature type="domain" description="Ig-like V-type">
    <location>
        <begin position="38"/>
        <end position="152"/>
    </location>
</feature>
<feature type="domain" description="Link 1" evidence="3">
    <location>
        <begin position="159"/>
        <end position="254"/>
    </location>
</feature>
<feature type="domain" description="Link 2" evidence="3">
    <location>
        <begin position="259"/>
        <end position="351"/>
    </location>
</feature>
<feature type="glycosylation site" description="N-linked (GlcNAc...) asparagine" evidence="2">
    <location>
        <position position="21"/>
    </location>
</feature>
<feature type="glycosylation site" description="N-linked (GlcNAc...) asparagine" evidence="2">
    <location>
        <position position="56"/>
    </location>
</feature>
<feature type="disulfide bond" evidence="1">
    <location>
        <begin position="61"/>
        <end position="139"/>
    </location>
</feature>
<feature type="disulfide bond" evidence="1">
    <location>
        <begin position="181"/>
        <end position="252"/>
    </location>
</feature>
<feature type="disulfide bond" evidence="1">
    <location>
        <begin position="205"/>
        <end position="226"/>
    </location>
</feature>
<feature type="disulfide bond" evidence="1">
    <location>
        <begin position="279"/>
        <end position="349"/>
    </location>
</feature>
<feature type="disulfide bond" evidence="1">
    <location>
        <begin position="304"/>
        <end position="325"/>
    </location>
</feature>
<organism>
    <name type="scientific">Equus caballus</name>
    <name type="common">Horse</name>
    <dbReference type="NCBI Taxonomy" id="9796"/>
    <lineage>
        <taxon>Eukaryota</taxon>
        <taxon>Metazoa</taxon>
        <taxon>Chordata</taxon>
        <taxon>Craniata</taxon>
        <taxon>Vertebrata</taxon>
        <taxon>Euteleostomi</taxon>
        <taxon>Mammalia</taxon>
        <taxon>Eutheria</taxon>
        <taxon>Laurasiatheria</taxon>
        <taxon>Perissodactyla</taxon>
        <taxon>Equidae</taxon>
        <taxon>Equus</taxon>
    </lineage>
</organism>
<proteinExistence type="evidence at transcript level"/>
<protein>
    <recommendedName>
        <fullName>Hyaluronan and proteoglycan link protein 1</fullName>
    </recommendedName>
    <alternativeName>
        <fullName>Cartilage-linking protein 1</fullName>
        <shortName>Cartilage-link protein</shortName>
    </alternativeName>
    <alternativeName>
        <fullName>Proteoglycan link protein</fullName>
    </alternativeName>
</protein>
<reference key="1">
    <citation type="journal article" date="1995" name="Am. J. Vet. Res.">
        <title>Complete primary sequence of equine cartilage link protein deduced from complementary DNA.</title>
        <authorList>
            <person name="Dudhia J."/>
            <person name="Platt D."/>
        </authorList>
    </citation>
    <scope>NUCLEOTIDE SEQUENCE [MRNA]</scope>
    <source>
        <tissue>Cartilage</tissue>
    </source>
</reference>
<accession>Q28381</accession>
<name>HPLN1_HORSE</name>
<keyword id="KW-1015">Disulfide bond</keyword>
<keyword id="KW-0272">Extracellular matrix</keyword>
<keyword id="KW-0325">Glycoprotein</keyword>
<keyword id="KW-0373">Hyaluronic acid</keyword>
<keyword id="KW-0393">Immunoglobulin domain</keyword>
<keyword id="KW-1185">Reference proteome</keyword>
<keyword id="KW-0677">Repeat</keyword>
<keyword id="KW-0964">Secreted</keyword>
<evidence type="ECO:0000250" key="1"/>
<evidence type="ECO:0000255" key="2"/>
<evidence type="ECO:0000255" key="3">
    <source>
        <dbReference type="PROSITE-ProRule" id="PRU00323"/>
    </source>
</evidence>
<evidence type="ECO:0000305" key="4"/>
<sequence length="354" mass="40077">MKSLLLLVLISICGADHRSDNYTLDHDRVIHIQAENGPRLLVEAEQAKVFSHRGGNVTLPCKFLRDPTAFGSGTHKIRIKWTKLTSDYLKEVDVFVSMGYHKKTYGGYQGRVFLKGGSDNDASLVITDLTLDDYGRYKCEVIEGLEDDTAVVALDLQGVVFPYFPRLGRYNLNFHEAQQACLDQDAVIASFDQLYDAWRGGLDWCNAGWLSDGSVQYPITKPREPCGGQNTVPGVRNYGFWDKEKSRYDVFCFTSNFNGRFYYLIHPTKLTYDEAVQACLKDGAQIAKVGQIFAAWKLLGYDRCDAGWLADGSVRYPISRPRRRCSPTEAAVRFVGFPDKKHKLYGVYCFRAYN</sequence>